<accession>P66673</accession>
<accession>Q8YFR3</accession>
<evidence type="ECO:0000255" key="1">
    <source>
        <dbReference type="HAMAP-Rule" id="MF_00042"/>
    </source>
</evidence>
<evidence type="ECO:0000255" key="2">
    <source>
        <dbReference type="PROSITE-ProRule" id="PRU00408"/>
    </source>
</evidence>
<comment type="function">
    <text evidence="1">Endonuclease that specifically degrades the RNA of RNA-DNA hybrids.</text>
</comment>
<comment type="catalytic activity">
    <reaction evidence="1">
        <text>Endonucleolytic cleavage to 5'-phosphomonoester.</text>
        <dbReference type="EC" id="3.1.26.4"/>
    </reaction>
</comment>
<comment type="cofactor">
    <cofactor evidence="1">
        <name>Mg(2+)</name>
        <dbReference type="ChEBI" id="CHEBI:18420"/>
    </cofactor>
    <text evidence="1">Binds 1 Mg(2+) ion per subunit. May bind a second metal ion at a regulatory site, or after substrate binding.</text>
</comment>
<comment type="subunit">
    <text evidence="1">Monomer.</text>
</comment>
<comment type="subcellular location">
    <subcellularLocation>
        <location evidence="1">Cytoplasm</location>
    </subcellularLocation>
</comment>
<comment type="similarity">
    <text evidence="1">Belongs to the RNase H family.</text>
</comment>
<name>RNH_BRUME</name>
<reference key="1">
    <citation type="journal article" date="2002" name="Proc. Natl. Acad. Sci. U.S.A.">
        <title>The genome sequence of the facultative intracellular pathogen Brucella melitensis.</title>
        <authorList>
            <person name="DelVecchio V.G."/>
            <person name="Kapatral V."/>
            <person name="Redkar R.J."/>
            <person name="Patra G."/>
            <person name="Mujer C."/>
            <person name="Los T."/>
            <person name="Ivanova N."/>
            <person name="Anderson I."/>
            <person name="Bhattacharyya A."/>
            <person name="Lykidis A."/>
            <person name="Reznik G."/>
            <person name="Jablonski L."/>
            <person name="Larsen N."/>
            <person name="D'Souza M."/>
            <person name="Bernal A."/>
            <person name="Mazur M."/>
            <person name="Goltsman E."/>
            <person name="Selkov E."/>
            <person name="Elzer P.H."/>
            <person name="Hagius S."/>
            <person name="O'Callaghan D."/>
            <person name="Letesson J.-J."/>
            <person name="Haselkorn R."/>
            <person name="Kyrpides N.C."/>
            <person name="Overbeek R."/>
        </authorList>
    </citation>
    <scope>NUCLEOTIDE SEQUENCE [LARGE SCALE GENOMIC DNA]</scope>
    <source>
        <strain>ATCC 23456 / CCUG 17765 / NCTC 10094 / 16M</strain>
    </source>
</reference>
<feature type="chain" id="PRO_0000195365" description="Ribonuclease HI">
    <location>
        <begin position="1"/>
        <end position="154"/>
    </location>
</feature>
<feature type="domain" description="RNase H type-1" evidence="2">
    <location>
        <begin position="1"/>
        <end position="141"/>
    </location>
</feature>
<feature type="binding site" evidence="1">
    <location>
        <position position="9"/>
    </location>
    <ligand>
        <name>Mg(2+)</name>
        <dbReference type="ChEBI" id="CHEBI:18420"/>
        <label>1</label>
    </ligand>
</feature>
<feature type="binding site" evidence="1">
    <location>
        <position position="9"/>
    </location>
    <ligand>
        <name>Mg(2+)</name>
        <dbReference type="ChEBI" id="CHEBI:18420"/>
        <label>2</label>
    </ligand>
</feature>
<feature type="binding site" evidence="1">
    <location>
        <position position="47"/>
    </location>
    <ligand>
        <name>Mg(2+)</name>
        <dbReference type="ChEBI" id="CHEBI:18420"/>
        <label>1</label>
    </ligand>
</feature>
<feature type="binding site" evidence="1">
    <location>
        <position position="69"/>
    </location>
    <ligand>
        <name>Mg(2+)</name>
        <dbReference type="ChEBI" id="CHEBI:18420"/>
        <label>1</label>
    </ligand>
</feature>
<feature type="binding site" evidence="1">
    <location>
        <position position="133"/>
    </location>
    <ligand>
        <name>Mg(2+)</name>
        <dbReference type="ChEBI" id="CHEBI:18420"/>
        <label>2</label>
    </ligand>
</feature>
<gene>
    <name evidence="1" type="primary">rnhA</name>
    <name type="ordered locus">BMEI1457</name>
</gene>
<keyword id="KW-0963">Cytoplasm</keyword>
<keyword id="KW-0255">Endonuclease</keyword>
<keyword id="KW-0378">Hydrolase</keyword>
<keyword id="KW-0460">Magnesium</keyword>
<keyword id="KW-0479">Metal-binding</keyword>
<keyword id="KW-0540">Nuclease</keyword>
<dbReference type="EC" id="3.1.26.4" evidence="1"/>
<dbReference type="EMBL" id="AE008917">
    <property type="protein sequence ID" value="AAL52638.1"/>
    <property type="molecule type" value="Genomic_DNA"/>
</dbReference>
<dbReference type="PIR" id="AC3434">
    <property type="entry name" value="AC3434"/>
</dbReference>
<dbReference type="RefSeq" id="WP_002963635.1">
    <property type="nucleotide sequence ID" value="NZ_GG703778.1"/>
</dbReference>
<dbReference type="SMR" id="P66673"/>
<dbReference type="GeneID" id="97534154"/>
<dbReference type="KEGG" id="bme:BMEI1457"/>
<dbReference type="KEGG" id="bmel:DK63_2030"/>
<dbReference type="PATRIC" id="fig|224914.52.peg.2132"/>
<dbReference type="eggNOG" id="COG0328">
    <property type="taxonomic scope" value="Bacteria"/>
</dbReference>
<dbReference type="PhylomeDB" id="P66673"/>
<dbReference type="Proteomes" id="UP000000419">
    <property type="component" value="Chromosome I"/>
</dbReference>
<dbReference type="GO" id="GO:0005737">
    <property type="term" value="C:cytoplasm"/>
    <property type="evidence" value="ECO:0007669"/>
    <property type="project" value="UniProtKB-SubCell"/>
</dbReference>
<dbReference type="GO" id="GO:0000287">
    <property type="term" value="F:magnesium ion binding"/>
    <property type="evidence" value="ECO:0007669"/>
    <property type="project" value="UniProtKB-UniRule"/>
</dbReference>
<dbReference type="GO" id="GO:0003676">
    <property type="term" value="F:nucleic acid binding"/>
    <property type="evidence" value="ECO:0007669"/>
    <property type="project" value="InterPro"/>
</dbReference>
<dbReference type="GO" id="GO:0004523">
    <property type="term" value="F:RNA-DNA hybrid ribonuclease activity"/>
    <property type="evidence" value="ECO:0007669"/>
    <property type="project" value="UniProtKB-UniRule"/>
</dbReference>
<dbReference type="GO" id="GO:0043137">
    <property type="term" value="P:DNA replication, removal of RNA primer"/>
    <property type="evidence" value="ECO:0007669"/>
    <property type="project" value="TreeGrafter"/>
</dbReference>
<dbReference type="CDD" id="cd09278">
    <property type="entry name" value="RNase_HI_prokaryote_like"/>
    <property type="match status" value="1"/>
</dbReference>
<dbReference type="FunFam" id="3.30.420.10:FF:000089">
    <property type="entry name" value="Ribonuclease H"/>
    <property type="match status" value="1"/>
</dbReference>
<dbReference type="Gene3D" id="3.30.420.10">
    <property type="entry name" value="Ribonuclease H-like superfamily/Ribonuclease H"/>
    <property type="match status" value="1"/>
</dbReference>
<dbReference type="HAMAP" id="MF_00042">
    <property type="entry name" value="RNase_H"/>
    <property type="match status" value="1"/>
</dbReference>
<dbReference type="InterPro" id="IPR050092">
    <property type="entry name" value="RNase_H"/>
</dbReference>
<dbReference type="InterPro" id="IPR012337">
    <property type="entry name" value="RNaseH-like_sf"/>
</dbReference>
<dbReference type="InterPro" id="IPR002156">
    <property type="entry name" value="RNaseH_domain"/>
</dbReference>
<dbReference type="InterPro" id="IPR036397">
    <property type="entry name" value="RNaseH_sf"/>
</dbReference>
<dbReference type="InterPro" id="IPR022892">
    <property type="entry name" value="RNaseHI"/>
</dbReference>
<dbReference type="NCBIfam" id="NF001236">
    <property type="entry name" value="PRK00203.1"/>
    <property type="match status" value="1"/>
</dbReference>
<dbReference type="PANTHER" id="PTHR10642">
    <property type="entry name" value="RIBONUCLEASE H1"/>
    <property type="match status" value="1"/>
</dbReference>
<dbReference type="PANTHER" id="PTHR10642:SF26">
    <property type="entry name" value="RIBONUCLEASE H1"/>
    <property type="match status" value="1"/>
</dbReference>
<dbReference type="Pfam" id="PF00075">
    <property type="entry name" value="RNase_H"/>
    <property type="match status" value="1"/>
</dbReference>
<dbReference type="SUPFAM" id="SSF53098">
    <property type="entry name" value="Ribonuclease H-like"/>
    <property type="match status" value="1"/>
</dbReference>
<dbReference type="PROSITE" id="PS50879">
    <property type="entry name" value="RNASE_H_1"/>
    <property type="match status" value="1"/>
</dbReference>
<protein>
    <recommendedName>
        <fullName evidence="1">Ribonuclease HI</fullName>
        <shortName evidence="1">RNase HI</shortName>
        <ecNumber evidence="1">3.1.26.4</ecNumber>
    </recommendedName>
</protein>
<organism>
    <name type="scientific">Brucella melitensis biotype 1 (strain ATCC 23456 / CCUG 17765 / NCTC 10094 / 16M)</name>
    <dbReference type="NCBI Taxonomy" id="224914"/>
    <lineage>
        <taxon>Bacteria</taxon>
        <taxon>Pseudomonadati</taxon>
        <taxon>Pseudomonadota</taxon>
        <taxon>Alphaproteobacteria</taxon>
        <taxon>Hyphomicrobiales</taxon>
        <taxon>Brucellaceae</taxon>
        <taxon>Brucella/Ochrobactrum group</taxon>
        <taxon>Brucella</taxon>
    </lineage>
</organism>
<sequence>MKRIEAYTDGACSGNPGPGGWGALLRWNGNEKELKGGEAETTNNRMELMAAISALSALKEPCEVDLYTDSVYVRDGISGWIEGWKRNGWKTAAKKPVKNAELWQALDEARKAHKVTWHWIKGHAGHPENERADELARAGMEPFKYAGHRTLKVK</sequence>
<proteinExistence type="inferred from homology"/>